<organism>
    <name type="scientific">Staphylococcus aureus (strain COL)</name>
    <dbReference type="NCBI Taxonomy" id="93062"/>
    <lineage>
        <taxon>Bacteria</taxon>
        <taxon>Bacillati</taxon>
        <taxon>Bacillota</taxon>
        <taxon>Bacilli</taxon>
        <taxon>Bacillales</taxon>
        <taxon>Staphylococcaceae</taxon>
        <taxon>Staphylococcus</taxon>
    </lineage>
</organism>
<feature type="chain" id="PRO_0000223375" description="DNA-binding protein HU">
    <location>
        <begin position="1"/>
        <end position="90"/>
    </location>
</feature>
<name>DBH_STAAC</name>
<gene>
    <name type="primary">hup</name>
    <name type="ordered locus">SACOL1513</name>
</gene>
<dbReference type="EMBL" id="CP000046">
    <property type="protein sequence ID" value="AAW36708.1"/>
    <property type="molecule type" value="Genomic_DNA"/>
</dbReference>
<dbReference type="RefSeq" id="WP_001043863.1">
    <property type="nucleotide sequence ID" value="NZ_JBGOFO010000003.1"/>
</dbReference>
<dbReference type="SMR" id="Q5HFV0"/>
<dbReference type="KEGG" id="sac:SACOL1513"/>
<dbReference type="HOGENOM" id="CLU_105066_3_2_9"/>
<dbReference type="Proteomes" id="UP000000530">
    <property type="component" value="Chromosome"/>
</dbReference>
<dbReference type="GO" id="GO:0005829">
    <property type="term" value="C:cytosol"/>
    <property type="evidence" value="ECO:0007669"/>
    <property type="project" value="TreeGrafter"/>
</dbReference>
<dbReference type="GO" id="GO:0003677">
    <property type="term" value="F:DNA binding"/>
    <property type="evidence" value="ECO:0007669"/>
    <property type="project" value="UniProtKB-KW"/>
</dbReference>
<dbReference type="GO" id="GO:0030527">
    <property type="term" value="F:structural constituent of chromatin"/>
    <property type="evidence" value="ECO:0007669"/>
    <property type="project" value="InterPro"/>
</dbReference>
<dbReference type="GO" id="GO:0030261">
    <property type="term" value="P:chromosome condensation"/>
    <property type="evidence" value="ECO:0007669"/>
    <property type="project" value="UniProtKB-KW"/>
</dbReference>
<dbReference type="CDD" id="cd13831">
    <property type="entry name" value="HU"/>
    <property type="match status" value="1"/>
</dbReference>
<dbReference type="FunFam" id="4.10.520.10:FF:000001">
    <property type="entry name" value="DNA-binding protein HU"/>
    <property type="match status" value="1"/>
</dbReference>
<dbReference type="Gene3D" id="4.10.520.10">
    <property type="entry name" value="IHF-like DNA-binding proteins"/>
    <property type="match status" value="1"/>
</dbReference>
<dbReference type="InterPro" id="IPR000119">
    <property type="entry name" value="Hist_DNA-bd"/>
</dbReference>
<dbReference type="InterPro" id="IPR020816">
    <property type="entry name" value="Histone-like_DNA-bd_CS"/>
</dbReference>
<dbReference type="InterPro" id="IPR010992">
    <property type="entry name" value="IHF-like_DNA-bd_dom_sf"/>
</dbReference>
<dbReference type="PANTHER" id="PTHR33175">
    <property type="entry name" value="DNA-BINDING PROTEIN HU"/>
    <property type="match status" value="1"/>
</dbReference>
<dbReference type="PANTHER" id="PTHR33175:SF3">
    <property type="entry name" value="DNA-BINDING PROTEIN HU-BETA"/>
    <property type="match status" value="1"/>
</dbReference>
<dbReference type="Pfam" id="PF00216">
    <property type="entry name" value="Bac_DNA_binding"/>
    <property type="match status" value="1"/>
</dbReference>
<dbReference type="PRINTS" id="PR01727">
    <property type="entry name" value="DNABINDINGHU"/>
</dbReference>
<dbReference type="SMART" id="SM00411">
    <property type="entry name" value="BHL"/>
    <property type="match status" value="1"/>
</dbReference>
<dbReference type="SUPFAM" id="SSF47729">
    <property type="entry name" value="IHF-like DNA-binding proteins"/>
    <property type="match status" value="1"/>
</dbReference>
<dbReference type="PROSITE" id="PS00045">
    <property type="entry name" value="HISTONE_LIKE"/>
    <property type="match status" value="1"/>
</dbReference>
<reference key="1">
    <citation type="journal article" date="2005" name="J. Bacteriol.">
        <title>Insights on evolution of virulence and resistance from the complete genome analysis of an early methicillin-resistant Staphylococcus aureus strain and a biofilm-producing methicillin-resistant Staphylococcus epidermidis strain.</title>
        <authorList>
            <person name="Gill S.R."/>
            <person name="Fouts D.E."/>
            <person name="Archer G.L."/>
            <person name="Mongodin E.F."/>
            <person name="DeBoy R.T."/>
            <person name="Ravel J."/>
            <person name="Paulsen I.T."/>
            <person name="Kolonay J.F."/>
            <person name="Brinkac L.M."/>
            <person name="Beanan M.J."/>
            <person name="Dodson R.J."/>
            <person name="Daugherty S.C."/>
            <person name="Madupu R."/>
            <person name="Angiuoli S.V."/>
            <person name="Durkin A.S."/>
            <person name="Haft D.H."/>
            <person name="Vamathevan J.J."/>
            <person name="Khouri H."/>
            <person name="Utterback T.R."/>
            <person name="Lee C."/>
            <person name="Dimitrov G."/>
            <person name="Jiang L."/>
            <person name="Qin H."/>
            <person name="Weidman J."/>
            <person name="Tran K."/>
            <person name="Kang K.H."/>
            <person name="Hance I.R."/>
            <person name="Nelson K.E."/>
            <person name="Fraser C.M."/>
        </authorList>
    </citation>
    <scope>NUCLEOTIDE SEQUENCE [LARGE SCALE GENOMIC DNA]</scope>
    <source>
        <strain>COL</strain>
    </source>
</reference>
<evidence type="ECO:0000250" key="1"/>
<evidence type="ECO:0000305" key="2"/>
<accession>Q5HFV0</accession>
<comment type="function">
    <text evidence="1">Histone-like DNA-binding protein which is capable of wrapping DNA to stabilize it, and thus to prevent its denaturation under extreme environmental conditions.</text>
</comment>
<comment type="subunit">
    <text evidence="1">Homodimer.</text>
</comment>
<comment type="similarity">
    <text evidence="2">Belongs to the bacterial histone-like protein family.</text>
</comment>
<keyword id="KW-0226">DNA condensation</keyword>
<keyword id="KW-0238">DNA-binding</keyword>
<proteinExistence type="inferred from homology"/>
<protein>
    <recommendedName>
        <fullName>DNA-binding protein HU</fullName>
    </recommendedName>
</protein>
<sequence>MNKTDLINAVAEQADLTKKEAGSAVDAVFESIQNSLAKGEKVQLIGFGNFEVRERAARKGRNPQTGKEIDIPASKVPAFKAGKALKDAVK</sequence>